<gene>
    <name evidence="7" type="primary">asR5</name>
</gene>
<reference key="1">
    <citation type="journal article" date="2018" name="Nat. Commun.">
        <title>Three previously unrecognised classes of biosynthetic enzymes revealed during the production of xenovulene A.</title>
        <authorList>
            <person name="Schor R."/>
            <person name="Schotte C."/>
            <person name="Wibberg D."/>
            <person name="Kalinowski J."/>
            <person name="Cox R.J."/>
        </authorList>
    </citation>
    <scope>NUCLEOTIDE SEQUENCE [GENOMIC DNA]</scope>
    <scope>INDUCTION</scope>
    <scope>FUNCTION</scope>
    <scope>PATHWAY</scope>
</reference>
<reference key="2">
    <citation type="journal article" date="1997" name="J. Pharmacol. Exp. Ther.">
        <title>Regulation of neuronal and recombinant GABA(A) receptor ion channels by xenovulene A, a natural product isolated from Acremonium strictum.</title>
        <authorList>
            <person name="Thomas P."/>
            <person name="Sundaram H."/>
            <person name="Krishek B.J."/>
            <person name="Chazot P."/>
            <person name="Xie X."/>
            <person name="Bevan P."/>
            <person name="Brocchini S.J."/>
            <person name="Latham C.J."/>
            <person name="Charlton P."/>
            <person name="Moore M."/>
            <person name="Lewis S.J."/>
            <person name="Thornton D.M."/>
            <person name="Stephenson F.A."/>
            <person name="Smart T.G."/>
        </authorList>
    </citation>
    <scope>BIOTECHNOLOGY</scope>
</reference>
<reference key="3">
    <citation type="journal article" date="2007" name="Chem. Commun. (Camb.)">
        <title>Characterisation of 3-methylorcinaldehyde synthase (MOS) in Acremonium strictum: first observation of a reductive release mechanism during polyketide biosynthesis.</title>
        <authorList>
            <person name="Bailey A.M."/>
            <person name="Cox R.J."/>
            <person name="Harley K."/>
            <person name="Lazarus C.M."/>
            <person name="Simpson T.J."/>
            <person name="Skellam E."/>
        </authorList>
    </citation>
    <scope>FUNCTION</scope>
</reference>
<reference key="4">
    <citation type="journal article" date="2010" name="Chem. Commun. (Camb.)">
        <title>Catalytic role of the C-terminal domains of a fungal non-reducing polyketide synthase.</title>
        <authorList>
            <person name="Fisch K.M."/>
            <person name="Skellam E."/>
            <person name="Ivison D."/>
            <person name="Cox R.J."/>
            <person name="Bailey A.M."/>
            <person name="Lazarus C.M."/>
            <person name="Simpson T.J."/>
        </authorList>
    </citation>
    <scope>FUNCTION</scope>
</reference>
<organism>
    <name type="scientific">Sarocladium schorii</name>
    <name type="common">Acremonium strictum (strain IMI 501407)</name>
    <dbReference type="NCBI Taxonomy" id="2203296"/>
    <lineage>
        <taxon>Eukaryota</taxon>
        <taxon>Fungi</taxon>
        <taxon>Dikarya</taxon>
        <taxon>Ascomycota</taxon>
        <taxon>Pezizomycotina</taxon>
        <taxon>Sordariomycetes</taxon>
        <taxon>Hypocreomycetidae</taxon>
        <taxon>Hypocreales</taxon>
        <taxon>Sarocladiaceae</taxon>
        <taxon>Sarocladium</taxon>
    </lineage>
</organism>
<protein>
    <recommendedName>
        <fullName evidence="7">Putative hetero-Diels-Alderase asR5</fullName>
        <ecNumber evidence="5">5.5.-.-</ecNumber>
    </recommendedName>
    <alternativeName>
        <fullName evidence="7">Xenovulene A biosynthesis cluster protein R5</fullName>
    </alternativeName>
</protein>
<proteinExistence type="evidence at protein level"/>
<dbReference type="EC" id="5.5.-.-" evidence="5"/>
<dbReference type="EMBL" id="MG736817">
    <property type="protein sequence ID" value="AWM95794.1"/>
    <property type="molecule type" value="Genomic_DNA"/>
</dbReference>
<dbReference type="SMR" id="A0A2U8U2M1"/>
<dbReference type="GlyCosmos" id="A0A2U8U2M1">
    <property type="glycosylation" value="4 sites, No reported glycans"/>
</dbReference>
<dbReference type="UniPathway" id="UPA00213"/>
<dbReference type="GO" id="GO:0016853">
    <property type="term" value="F:isomerase activity"/>
    <property type="evidence" value="ECO:0007669"/>
    <property type="project" value="UniProtKB-KW"/>
</dbReference>
<dbReference type="GO" id="GO:0016114">
    <property type="term" value="P:terpenoid biosynthetic process"/>
    <property type="evidence" value="ECO:0007669"/>
    <property type="project" value="UniProtKB-UniPathway"/>
</dbReference>
<dbReference type="Gene3D" id="2.120.10.30">
    <property type="entry name" value="TolB, C-terminal domain"/>
    <property type="match status" value="1"/>
</dbReference>
<dbReference type="InterPro" id="IPR011042">
    <property type="entry name" value="6-blade_b-propeller_TolB-like"/>
</dbReference>
<dbReference type="InterPro" id="IPR052998">
    <property type="entry name" value="Hetero-Diels-Alderase-like"/>
</dbReference>
<dbReference type="PANTHER" id="PTHR42060:SF1">
    <property type="entry name" value="NHL REPEAT-CONTAINING PROTEIN"/>
    <property type="match status" value="1"/>
</dbReference>
<dbReference type="PANTHER" id="PTHR42060">
    <property type="entry name" value="NHL REPEAT-CONTAINING PROTEIN-RELATED"/>
    <property type="match status" value="1"/>
</dbReference>
<dbReference type="SUPFAM" id="SSF63829">
    <property type="entry name" value="Calcium-dependent phosphotriesterase"/>
    <property type="match status" value="1"/>
</dbReference>
<name>ASR5_SARSH</name>
<comment type="function">
    <text evidence="3 4 5">Putative hetero-Diels-Alderase; part of the gene cluster that mediates the biosynthesis of xenovulene A, an unusual meroterpenoid that has potent inhibitory effects on the human gamma-aminobutyrate A (GABAA) benzodiazepine receptor (PubMed:29773797). The first step of xenovulene A biosynthesis is the biosynthesis of 3-methylorcinaldehyde performed by the non-reducing polyketide synthase aspks1 (PubMed:17912413, PubMed:20552126, PubMed:29773797). The salicylate hydroxylase asL1 then catalyzes the oxidative dearomatization of 3-methylorcinaldehyde to yield a dearomatized hydroxycyclohexadione (PubMed:29773797). The 2-oxoglutarate-dependent dioxygenase asL3 further catalyzes the oxidative ring expansion to provide the first tropolone metabolite (PubMed:29773797). The cytochrome P450 monooxygenase asR2 allows the synthesis of tropolone hemiacetal (PubMed:29773797). In parallel, a previously unrecognised class of terpene cyclase, asR6, produces alpha-humulene from farnesylpyrophosphate (FPP) (PubMed:29773797). The putative Diels-Alderase asR5 probably catalyzes the formation of the tropolone-humulene skeleton by linking humulene and the polyketide moiety (PubMed:29773797). Oxidative-ring contractions catalyzed by asL4 and asL6 then processively remove carbon atoms from the polyketide to yield xenovulene A (PubMed:29773797).</text>
</comment>
<comment type="pathway">
    <text evidence="5">Secondary metabolite biosynthesis; terpenoid biosynthesis.</text>
</comment>
<comment type="induction">
    <text evidence="5">Expression is significantly up-regulated under xenovulene A producing condition.</text>
</comment>
<comment type="biotechnology">
    <text evidence="6">Xenovulene A is a natural product exhibiting little structural resemblance with classical benzodiazepines yet is able to displace high-affinity ligand binding to the benzodiazepine site of the gamma-aminobutyrate A (GABAA) receptor and could be potentially used as an anti-depressant with reduced addictive properties.</text>
</comment>
<comment type="similarity">
    <text evidence="8">Belongs to the eupF Diels-Alderase family.</text>
</comment>
<sequence length="401" mass="44334">MRRSFLISAALGLSMSTPALAASIQSVLGYLRPTSHHHAPCADDVVLKQSAGSDSAAPDPLPSRVVHNWPNGTWIENISVRPNGNLLVSQSTPRGRVWQVKEPWLDEPKVELAYDFDEWVDRIIGIGETTPDKYVVVGSRFYSLDPQSSQVERTFCAMELDFTKGEKPSARLVARFPHANLLQSVSALPWDRSVVLISDQYLLHPRADWEDLTPGPGQIWRLDTKTGHHEIVMTNYAEMNTTYNHGLDVGINGIKIHGDHLYWINMDTGGAYRVRIDKYGYPTPLNAVPETLGVAEDALWDDFAMHGTRIGEESDDTTMFATSIVNLMAISPENGTIVPLAGVGTSEPMGFPGPTSAQFGRTEKDSHILYVTGKLFNVPPSIRDVVIQGWVRAIDTTGFHF</sequence>
<evidence type="ECO:0000255" key="1"/>
<evidence type="ECO:0000255" key="2">
    <source>
        <dbReference type="PROSITE-ProRule" id="PRU00498"/>
    </source>
</evidence>
<evidence type="ECO:0000269" key="3">
    <source>
    </source>
</evidence>
<evidence type="ECO:0000269" key="4">
    <source>
    </source>
</evidence>
<evidence type="ECO:0000269" key="5">
    <source>
    </source>
</evidence>
<evidence type="ECO:0000269" key="6">
    <source>
    </source>
</evidence>
<evidence type="ECO:0000303" key="7">
    <source>
    </source>
</evidence>
<evidence type="ECO:0000305" key="8"/>
<feature type="signal peptide" evidence="1">
    <location>
        <begin position="1"/>
        <end position="21"/>
    </location>
</feature>
<feature type="chain" id="PRO_5016026768" description="Putative hetero-Diels-Alderase asR5" evidence="1">
    <location>
        <begin position="22"/>
        <end position="401"/>
    </location>
</feature>
<feature type="glycosylation site" description="N-linked (GlcNAc...) asparagine" evidence="2">
    <location>
        <position position="71"/>
    </location>
</feature>
<feature type="glycosylation site" description="N-linked (GlcNAc...) asparagine" evidence="2">
    <location>
        <position position="77"/>
    </location>
</feature>
<feature type="glycosylation site" description="N-linked (GlcNAc...) asparagine" evidence="2">
    <location>
        <position position="240"/>
    </location>
</feature>
<feature type="glycosylation site" description="N-linked (GlcNAc...) asparagine" evidence="2">
    <location>
        <position position="334"/>
    </location>
</feature>
<accession>A0A2U8U2M1</accession>
<keyword id="KW-0325">Glycoprotein</keyword>
<keyword id="KW-0413">Isomerase</keyword>
<keyword id="KW-0732">Signal</keyword>